<accession>B2VBM4</accession>
<organism>
    <name type="scientific">Erwinia tasmaniensis (strain DSM 17950 / CFBP 7177 / CIP 109463 / NCPPB 4357 / Et1/99)</name>
    <dbReference type="NCBI Taxonomy" id="465817"/>
    <lineage>
        <taxon>Bacteria</taxon>
        <taxon>Pseudomonadati</taxon>
        <taxon>Pseudomonadota</taxon>
        <taxon>Gammaproteobacteria</taxon>
        <taxon>Enterobacterales</taxon>
        <taxon>Erwiniaceae</taxon>
        <taxon>Erwinia</taxon>
    </lineage>
</organism>
<comment type="catalytic activity">
    <reaction evidence="1">
        <text>tRNA(Leu) + L-leucine + ATP = L-leucyl-tRNA(Leu) + AMP + diphosphate</text>
        <dbReference type="Rhea" id="RHEA:11688"/>
        <dbReference type="Rhea" id="RHEA-COMP:9613"/>
        <dbReference type="Rhea" id="RHEA-COMP:9622"/>
        <dbReference type="ChEBI" id="CHEBI:30616"/>
        <dbReference type="ChEBI" id="CHEBI:33019"/>
        <dbReference type="ChEBI" id="CHEBI:57427"/>
        <dbReference type="ChEBI" id="CHEBI:78442"/>
        <dbReference type="ChEBI" id="CHEBI:78494"/>
        <dbReference type="ChEBI" id="CHEBI:456215"/>
        <dbReference type="EC" id="6.1.1.4"/>
    </reaction>
</comment>
<comment type="subcellular location">
    <subcellularLocation>
        <location evidence="1">Cytoplasm</location>
    </subcellularLocation>
</comment>
<comment type="similarity">
    <text evidence="1">Belongs to the class-I aminoacyl-tRNA synthetase family.</text>
</comment>
<reference key="1">
    <citation type="journal article" date="2008" name="Environ. Microbiol.">
        <title>The genome of Erwinia tasmaniensis strain Et1/99, a non-pathogenic bacterium in the genus Erwinia.</title>
        <authorList>
            <person name="Kube M."/>
            <person name="Migdoll A.M."/>
            <person name="Mueller I."/>
            <person name="Kuhl H."/>
            <person name="Beck A."/>
            <person name="Reinhardt R."/>
            <person name="Geider K."/>
        </authorList>
    </citation>
    <scope>NUCLEOTIDE SEQUENCE [LARGE SCALE GENOMIC DNA]</scope>
    <source>
        <strain>DSM 17950 / CFBP 7177 / CIP 109463 / NCPPB 4357 / Et1/99</strain>
    </source>
</reference>
<feature type="chain" id="PRO_1000091317" description="Leucine--tRNA ligase">
    <location>
        <begin position="1"/>
        <end position="860"/>
    </location>
</feature>
<feature type="short sequence motif" description="'HIGH' region">
    <location>
        <begin position="42"/>
        <end position="52"/>
    </location>
</feature>
<feature type="short sequence motif" description="'KMSKS' region">
    <location>
        <begin position="619"/>
        <end position="623"/>
    </location>
</feature>
<feature type="binding site" evidence="1">
    <location>
        <position position="622"/>
    </location>
    <ligand>
        <name>ATP</name>
        <dbReference type="ChEBI" id="CHEBI:30616"/>
    </ligand>
</feature>
<protein>
    <recommendedName>
        <fullName evidence="1">Leucine--tRNA ligase</fullName>
        <ecNumber evidence="1">6.1.1.4</ecNumber>
    </recommendedName>
    <alternativeName>
        <fullName evidence="1">Leucyl-tRNA synthetase</fullName>
        <shortName evidence="1">LeuRS</shortName>
    </alternativeName>
</protein>
<gene>
    <name evidence="1" type="primary">leuS</name>
    <name type="ordered locus">ETA_23470</name>
</gene>
<evidence type="ECO:0000255" key="1">
    <source>
        <dbReference type="HAMAP-Rule" id="MF_00049"/>
    </source>
</evidence>
<dbReference type="EC" id="6.1.1.4" evidence="1"/>
<dbReference type="EMBL" id="CU468135">
    <property type="protein sequence ID" value="CAO97393.1"/>
    <property type="molecule type" value="Genomic_DNA"/>
</dbReference>
<dbReference type="RefSeq" id="WP_012442062.1">
    <property type="nucleotide sequence ID" value="NC_010694.1"/>
</dbReference>
<dbReference type="SMR" id="B2VBM4"/>
<dbReference type="STRING" id="465817.ETA_23470"/>
<dbReference type="KEGG" id="eta:ETA_23470"/>
<dbReference type="eggNOG" id="COG0495">
    <property type="taxonomic scope" value="Bacteria"/>
</dbReference>
<dbReference type="HOGENOM" id="CLU_004427_0_0_6"/>
<dbReference type="OrthoDB" id="9810365at2"/>
<dbReference type="Proteomes" id="UP000001726">
    <property type="component" value="Chromosome"/>
</dbReference>
<dbReference type="GO" id="GO:0005829">
    <property type="term" value="C:cytosol"/>
    <property type="evidence" value="ECO:0007669"/>
    <property type="project" value="TreeGrafter"/>
</dbReference>
<dbReference type="GO" id="GO:0002161">
    <property type="term" value="F:aminoacyl-tRNA deacylase activity"/>
    <property type="evidence" value="ECO:0007669"/>
    <property type="project" value="InterPro"/>
</dbReference>
<dbReference type="GO" id="GO:0005524">
    <property type="term" value="F:ATP binding"/>
    <property type="evidence" value="ECO:0007669"/>
    <property type="project" value="UniProtKB-UniRule"/>
</dbReference>
<dbReference type="GO" id="GO:0004823">
    <property type="term" value="F:leucine-tRNA ligase activity"/>
    <property type="evidence" value="ECO:0007669"/>
    <property type="project" value="UniProtKB-UniRule"/>
</dbReference>
<dbReference type="GO" id="GO:0006429">
    <property type="term" value="P:leucyl-tRNA aminoacylation"/>
    <property type="evidence" value="ECO:0007669"/>
    <property type="project" value="UniProtKB-UniRule"/>
</dbReference>
<dbReference type="CDD" id="cd07958">
    <property type="entry name" value="Anticodon_Ia_Leu_BEm"/>
    <property type="match status" value="1"/>
</dbReference>
<dbReference type="CDD" id="cd00812">
    <property type="entry name" value="LeuRS_core"/>
    <property type="match status" value="1"/>
</dbReference>
<dbReference type="FunFam" id="1.10.730.10:FF:000002">
    <property type="entry name" value="Leucine--tRNA ligase"/>
    <property type="match status" value="2"/>
</dbReference>
<dbReference type="FunFam" id="2.20.28.290:FF:000001">
    <property type="entry name" value="Leucine--tRNA ligase"/>
    <property type="match status" value="1"/>
</dbReference>
<dbReference type="FunFam" id="3.10.20.590:FF:000001">
    <property type="entry name" value="Leucine--tRNA ligase"/>
    <property type="match status" value="1"/>
</dbReference>
<dbReference type="FunFam" id="3.40.50.620:FF:000003">
    <property type="entry name" value="Leucine--tRNA ligase"/>
    <property type="match status" value="1"/>
</dbReference>
<dbReference type="FunFam" id="3.40.50.620:FF:000124">
    <property type="entry name" value="Leucine--tRNA ligase"/>
    <property type="match status" value="1"/>
</dbReference>
<dbReference type="FunFam" id="3.90.740.10:FF:000012">
    <property type="entry name" value="Leucine--tRNA ligase"/>
    <property type="match status" value="1"/>
</dbReference>
<dbReference type="Gene3D" id="2.20.28.290">
    <property type="match status" value="1"/>
</dbReference>
<dbReference type="Gene3D" id="3.10.20.590">
    <property type="match status" value="1"/>
</dbReference>
<dbReference type="Gene3D" id="3.40.50.620">
    <property type="entry name" value="HUPs"/>
    <property type="match status" value="2"/>
</dbReference>
<dbReference type="Gene3D" id="1.10.730.10">
    <property type="entry name" value="Isoleucyl-tRNA Synthetase, Domain 1"/>
    <property type="match status" value="2"/>
</dbReference>
<dbReference type="Gene3D" id="3.90.740.10">
    <property type="entry name" value="Valyl/Leucyl/Isoleucyl-tRNA synthetase, editing domain"/>
    <property type="match status" value="1"/>
</dbReference>
<dbReference type="HAMAP" id="MF_00049_B">
    <property type="entry name" value="Leu_tRNA_synth_B"/>
    <property type="match status" value="1"/>
</dbReference>
<dbReference type="InterPro" id="IPR001412">
    <property type="entry name" value="aa-tRNA-synth_I_CS"/>
</dbReference>
<dbReference type="InterPro" id="IPR002300">
    <property type="entry name" value="aa-tRNA-synth_Ia"/>
</dbReference>
<dbReference type="InterPro" id="IPR002302">
    <property type="entry name" value="Leu-tRNA-ligase"/>
</dbReference>
<dbReference type="InterPro" id="IPR025709">
    <property type="entry name" value="Leu_tRNA-synth_edit"/>
</dbReference>
<dbReference type="InterPro" id="IPR013155">
    <property type="entry name" value="M/V/L/I-tRNA-synth_anticd-bd"/>
</dbReference>
<dbReference type="InterPro" id="IPR015413">
    <property type="entry name" value="Methionyl/Leucyl_tRNA_Synth"/>
</dbReference>
<dbReference type="InterPro" id="IPR014729">
    <property type="entry name" value="Rossmann-like_a/b/a_fold"/>
</dbReference>
<dbReference type="InterPro" id="IPR009080">
    <property type="entry name" value="tRNAsynth_Ia_anticodon-bd"/>
</dbReference>
<dbReference type="InterPro" id="IPR009008">
    <property type="entry name" value="Val/Leu/Ile-tRNA-synth_edit"/>
</dbReference>
<dbReference type="NCBIfam" id="TIGR00396">
    <property type="entry name" value="leuS_bact"/>
    <property type="match status" value="1"/>
</dbReference>
<dbReference type="PANTHER" id="PTHR43740:SF2">
    <property type="entry name" value="LEUCINE--TRNA LIGASE, MITOCHONDRIAL"/>
    <property type="match status" value="1"/>
</dbReference>
<dbReference type="PANTHER" id="PTHR43740">
    <property type="entry name" value="LEUCYL-TRNA SYNTHETASE"/>
    <property type="match status" value="1"/>
</dbReference>
<dbReference type="Pfam" id="PF08264">
    <property type="entry name" value="Anticodon_1"/>
    <property type="match status" value="1"/>
</dbReference>
<dbReference type="Pfam" id="PF00133">
    <property type="entry name" value="tRNA-synt_1"/>
    <property type="match status" value="2"/>
</dbReference>
<dbReference type="Pfam" id="PF13603">
    <property type="entry name" value="tRNA-synt_1_2"/>
    <property type="match status" value="1"/>
</dbReference>
<dbReference type="Pfam" id="PF09334">
    <property type="entry name" value="tRNA-synt_1g"/>
    <property type="match status" value="1"/>
</dbReference>
<dbReference type="PRINTS" id="PR00985">
    <property type="entry name" value="TRNASYNTHLEU"/>
</dbReference>
<dbReference type="SUPFAM" id="SSF47323">
    <property type="entry name" value="Anticodon-binding domain of a subclass of class I aminoacyl-tRNA synthetases"/>
    <property type="match status" value="1"/>
</dbReference>
<dbReference type="SUPFAM" id="SSF52374">
    <property type="entry name" value="Nucleotidylyl transferase"/>
    <property type="match status" value="1"/>
</dbReference>
<dbReference type="SUPFAM" id="SSF50677">
    <property type="entry name" value="ValRS/IleRS/LeuRS editing domain"/>
    <property type="match status" value="1"/>
</dbReference>
<dbReference type="PROSITE" id="PS00178">
    <property type="entry name" value="AA_TRNA_LIGASE_I"/>
    <property type="match status" value="1"/>
</dbReference>
<name>SYL_ERWT9</name>
<proteinExistence type="inferred from homology"/>
<sequence>MQEQYRPEEIESNVQQHWDEKQTFKVTEDEGKEKYYCLSMLPYPSGRLHMGHVRNYTIGDVISRYQRMLGKNVLQPIGWDAFGLPAEGAAVKNNTAPAPWTYANIDYMKNQLKLLGFGYDWNRELATCQPEYYRWEQWFFTKLYEKGLVYKKTSAVNWCPHDMTVLANEQVIDGCCWRCDSKVERKEIPQWFVKITDYADELLNDLDKLESWPEQVKTMQRNWIGRSEGVEIEFTVLNSEEKLSVYTTRPDTFMGVTYLAVAAGHPLAAQAALNNPALADFIAECRNTKVAEADMATMEKKGMATGLFAAHPLTGEKVPVWVANFVLMEYGTGAVMAVPGHDQRDWEFASKYSLPIKPVILAADGSEPDLSGSAMTEKGTLFNSGEFDGLSHEAGFDAIAAKLADKGVGERKVNYRLRDWGVSRQRYWGAPIPMVTLEDGTVMPTPEDQLPVILPEDVVMDGITSPIKADAEWAKTTVNGQPALRETDTFDTFMESSWYYARYTCPNYDKGMLDPAAANYWLPVDQYVGGIEHAIMHLLYFRFFHKLLRDTGLVNSDEPAKRLLCQGMVLADAFYFTGSNGERNWVSPTDVSVERDEKGRITKATDNDGNELIYAGMSKMSKSKNNGIDPQVMVERYGADTVRLFMMFASPAEMTLEWQESGVEGANRFLKRVWRLAFEHTEKGPTVALDLDALNDEQKALRRDLHKTISKVSDDIGRRQTFNTAIAAIMELMNKLARAPQETEQDRALMQEALLAVVRMLNPFTPHASFVLWQALGGAGEIDNAPWPQAEEAAMVEDSLLVVVQVNGKVRGKITVAADATQEQVQARAAQEHLVAKYLDGVTIRKVIFVPGKLLNLVVG</sequence>
<keyword id="KW-0030">Aminoacyl-tRNA synthetase</keyword>
<keyword id="KW-0067">ATP-binding</keyword>
<keyword id="KW-0963">Cytoplasm</keyword>
<keyword id="KW-0436">Ligase</keyword>
<keyword id="KW-0547">Nucleotide-binding</keyword>
<keyword id="KW-0648">Protein biosynthesis</keyword>
<keyword id="KW-1185">Reference proteome</keyword>